<accession>B2S7M4</accession>
<sequence>MPSLKDLRNRIASVKATQKITKAMQMVAAAKLRRAQEAAEAARPYSQRMGAVLANIAQNVSGEDAPALMVGTGKDDVHLLVVCTAKRGLCGGFNSQIARLARDHARKLLAEGKTVKIITVGKKGADILRREFSALLHDHVDLREVKQLAFVHADQIGHKIIKLFEEGAFDVCTLFYSEFKSVISQVSTAQQLIPASADNEAEMETAGDAIYEYEPDPAAILSTLIPRNISVQIFRALLENVAGEMGAKMSAMDNATRNAGDMINKLSITYNRQRQAQITKELIEIISGAEAL</sequence>
<protein>
    <recommendedName>
        <fullName evidence="1">ATP synthase gamma chain</fullName>
    </recommendedName>
    <alternativeName>
        <fullName evidence="1">ATP synthase F1 sector gamma subunit</fullName>
    </alternativeName>
    <alternativeName>
        <fullName evidence="1">F-ATPase gamma subunit</fullName>
    </alternativeName>
</protein>
<proteinExistence type="inferred from homology"/>
<feature type="chain" id="PRO_1000134116" description="ATP synthase gamma chain">
    <location>
        <begin position="1"/>
        <end position="292"/>
    </location>
</feature>
<organism>
    <name type="scientific">Brucella abortus (strain S19)</name>
    <dbReference type="NCBI Taxonomy" id="430066"/>
    <lineage>
        <taxon>Bacteria</taxon>
        <taxon>Pseudomonadati</taxon>
        <taxon>Pseudomonadota</taxon>
        <taxon>Alphaproteobacteria</taxon>
        <taxon>Hyphomicrobiales</taxon>
        <taxon>Brucellaceae</taxon>
        <taxon>Brucella/Ochrobactrum group</taxon>
        <taxon>Brucella</taxon>
    </lineage>
</organism>
<keyword id="KW-0066">ATP synthesis</keyword>
<keyword id="KW-0997">Cell inner membrane</keyword>
<keyword id="KW-1003">Cell membrane</keyword>
<keyword id="KW-0139">CF(1)</keyword>
<keyword id="KW-0375">Hydrogen ion transport</keyword>
<keyword id="KW-0406">Ion transport</keyword>
<keyword id="KW-0472">Membrane</keyword>
<keyword id="KW-0813">Transport</keyword>
<evidence type="ECO:0000255" key="1">
    <source>
        <dbReference type="HAMAP-Rule" id="MF_00815"/>
    </source>
</evidence>
<comment type="function">
    <text evidence="1">Produces ATP from ADP in the presence of a proton gradient across the membrane. The gamma chain is believed to be important in regulating ATPase activity and the flow of protons through the CF(0) complex.</text>
</comment>
<comment type="subunit">
    <text evidence="1">F-type ATPases have 2 components, CF(1) - the catalytic core - and CF(0) - the membrane proton channel. CF(1) has five subunits: alpha(3), beta(3), gamma(1), delta(1), epsilon(1). CF(0) has three main subunits: a, b and c.</text>
</comment>
<comment type="subcellular location">
    <subcellularLocation>
        <location evidence="1">Cell inner membrane</location>
        <topology evidence="1">Peripheral membrane protein</topology>
    </subcellularLocation>
</comment>
<comment type="similarity">
    <text evidence="1">Belongs to the ATPase gamma chain family.</text>
</comment>
<reference key="1">
    <citation type="journal article" date="2008" name="PLoS ONE">
        <title>Genome sequence of Brucella abortus vaccine strain S19 compared to virulent strains yields candidate virulence genes.</title>
        <authorList>
            <person name="Crasta O.R."/>
            <person name="Folkerts O."/>
            <person name="Fei Z."/>
            <person name="Mane S.P."/>
            <person name="Evans C."/>
            <person name="Martino-Catt S."/>
            <person name="Bricker B."/>
            <person name="Yu G."/>
            <person name="Du L."/>
            <person name="Sobral B.W."/>
        </authorList>
    </citation>
    <scope>NUCLEOTIDE SEQUENCE [LARGE SCALE GENOMIC DNA]</scope>
    <source>
        <strain>S19</strain>
    </source>
</reference>
<name>ATPG_BRUA1</name>
<dbReference type="EMBL" id="CP000887">
    <property type="protein sequence ID" value="ACD73171.1"/>
    <property type="molecule type" value="Genomic_DNA"/>
</dbReference>
<dbReference type="RefSeq" id="WP_002964877.1">
    <property type="nucleotide sequence ID" value="NC_010742.1"/>
</dbReference>
<dbReference type="SMR" id="B2S7M4"/>
<dbReference type="KEGG" id="bmc:BAbS19_I16890"/>
<dbReference type="HOGENOM" id="CLU_050669_0_1_5"/>
<dbReference type="Proteomes" id="UP000002565">
    <property type="component" value="Chromosome 1"/>
</dbReference>
<dbReference type="GO" id="GO:0005886">
    <property type="term" value="C:plasma membrane"/>
    <property type="evidence" value="ECO:0007669"/>
    <property type="project" value="UniProtKB-SubCell"/>
</dbReference>
<dbReference type="GO" id="GO:0045259">
    <property type="term" value="C:proton-transporting ATP synthase complex"/>
    <property type="evidence" value="ECO:0007669"/>
    <property type="project" value="UniProtKB-KW"/>
</dbReference>
<dbReference type="GO" id="GO:0005524">
    <property type="term" value="F:ATP binding"/>
    <property type="evidence" value="ECO:0007669"/>
    <property type="project" value="UniProtKB-UniRule"/>
</dbReference>
<dbReference type="GO" id="GO:0046933">
    <property type="term" value="F:proton-transporting ATP synthase activity, rotational mechanism"/>
    <property type="evidence" value="ECO:0007669"/>
    <property type="project" value="UniProtKB-UniRule"/>
</dbReference>
<dbReference type="GO" id="GO:0042777">
    <property type="term" value="P:proton motive force-driven plasma membrane ATP synthesis"/>
    <property type="evidence" value="ECO:0007669"/>
    <property type="project" value="UniProtKB-UniRule"/>
</dbReference>
<dbReference type="CDD" id="cd12151">
    <property type="entry name" value="F1-ATPase_gamma"/>
    <property type="match status" value="1"/>
</dbReference>
<dbReference type="FunFam" id="1.10.287.80:FF:000001">
    <property type="entry name" value="ATP synthase gamma chain"/>
    <property type="match status" value="1"/>
</dbReference>
<dbReference type="FunFam" id="1.10.287.80:FF:000003">
    <property type="entry name" value="ATP synthase gamma chain, chloroplastic"/>
    <property type="match status" value="1"/>
</dbReference>
<dbReference type="Gene3D" id="3.40.1380.10">
    <property type="match status" value="1"/>
</dbReference>
<dbReference type="Gene3D" id="1.10.287.80">
    <property type="entry name" value="ATP synthase, gamma subunit, helix hairpin domain"/>
    <property type="match status" value="1"/>
</dbReference>
<dbReference type="HAMAP" id="MF_00815">
    <property type="entry name" value="ATP_synth_gamma_bact"/>
    <property type="match status" value="1"/>
</dbReference>
<dbReference type="InterPro" id="IPR035968">
    <property type="entry name" value="ATP_synth_F1_ATPase_gsu"/>
</dbReference>
<dbReference type="InterPro" id="IPR000131">
    <property type="entry name" value="ATP_synth_F1_gsu"/>
</dbReference>
<dbReference type="InterPro" id="IPR023632">
    <property type="entry name" value="ATP_synth_F1_gsu_CS"/>
</dbReference>
<dbReference type="NCBIfam" id="TIGR01146">
    <property type="entry name" value="ATPsyn_F1gamma"/>
    <property type="match status" value="1"/>
</dbReference>
<dbReference type="NCBIfam" id="NF004146">
    <property type="entry name" value="PRK05621.1-4"/>
    <property type="match status" value="1"/>
</dbReference>
<dbReference type="PANTHER" id="PTHR11693">
    <property type="entry name" value="ATP SYNTHASE GAMMA CHAIN"/>
    <property type="match status" value="1"/>
</dbReference>
<dbReference type="PANTHER" id="PTHR11693:SF22">
    <property type="entry name" value="ATP SYNTHASE SUBUNIT GAMMA, MITOCHONDRIAL"/>
    <property type="match status" value="1"/>
</dbReference>
<dbReference type="Pfam" id="PF00231">
    <property type="entry name" value="ATP-synt"/>
    <property type="match status" value="1"/>
</dbReference>
<dbReference type="PIRSF" id="PIRSF039089">
    <property type="entry name" value="ATP_synthase_gamma"/>
    <property type="match status" value="1"/>
</dbReference>
<dbReference type="PRINTS" id="PR00126">
    <property type="entry name" value="ATPASEGAMMA"/>
</dbReference>
<dbReference type="SUPFAM" id="SSF52943">
    <property type="entry name" value="ATP synthase (F1-ATPase), gamma subunit"/>
    <property type="match status" value="1"/>
</dbReference>
<dbReference type="PROSITE" id="PS00153">
    <property type="entry name" value="ATPASE_GAMMA"/>
    <property type="match status" value="1"/>
</dbReference>
<gene>
    <name evidence="1" type="primary">atpG</name>
    <name type="ordered locus">BAbS19_I16890</name>
</gene>